<gene>
    <name evidence="1" type="primary">miaA</name>
    <name type="ordered locus">SO_0602</name>
</gene>
<sequence>MNKELQPKVVFLMGPTASGKTALALELAEKHNCEIISVDSALIYRGMDIGSAKPSAEELARGPHRLIDIRDPSESYSAADFRADALSEIEQIISMGKTPLLVGGTMMYFKALLEGLSPLPSADEVIRADIQAEADANGWEALHDQLREIDPVSAERIHPNDPQRLSRALEVYRISGKSLTELTMTKSAPLPYNVVQFAIAPRERKVLHELIGQRFRIMLEQGFIDEVAQLKARDDLHLDLPSMRCVGYRQCWQYLDGEFDHDTMVEKAIAATRQLAKRQLTWLRSWPELNWLESGAEGNLVTLMRHCR</sequence>
<reference key="1">
    <citation type="journal article" date="2002" name="Nat. Biotechnol.">
        <title>Genome sequence of the dissimilatory metal ion-reducing bacterium Shewanella oneidensis.</title>
        <authorList>
            <person name="Heidelberg J.F."/>
            <person name="Paulsen I.T."/>
            <person name="Nelson K.E."/>
            <person name="Gaidos E.J."/>
            <person name="Nelson W.C."/>
            <person name="Read T.D."/>
            <person name="Eisen J.A."/>
            <person name="Seshadri R."/>
            <person name="Ward N.L."/>
            <person name="Methe B.A."/>
            <person name="Clayton R.A."/>
            <person name="Meyer T."/>
            <person name="Tsapin A."/>
            <person name="Scott J."/>
            <person name="Beanan M.J."/>
            <person name="Brinkac L.M."/>
            <person name="Daugherty S.C."/>
            <person name="DeBoy R.T."/>
            <person name="Dodson R.J."/>
            <person name="Durkin A.S."/>
            <person name="Haft D.H."/>
            <person name="Kolonay J.F."/>
            <person name="Madupu R."/>
            <person name="Peterson J.D."/>
            <person name="Umayam L.A."/>
            <person name="White O."/>
            <person name="Wolf A.M."/>
            <person name="Vamathevan J.J."/>
            <person name="Weidman J.F."/>
            <person name="Impraim M."/>
            <person name="Lee K."/>
            <person name="Berry K.J."/>
            <person name="Lee C."/>
            <person name="Mueller J."/>
            <person name="Khouri H.M."/>
            <person name="Gill J."/>
            <person name="Utterback T.R."/>
            <person name="McDonald L.A."/>
            <person name="Feldblyum T.V."/>
            <person name="Smith H.O."/>
            <person name="Venter J.C."/>
            <person name="Nealson K.H."/>
            <person name="Fraser C.M."/>
        </authorList>
    </citation>
    <scope>NUCLEOTIDE SEQUENCE [LARGE SCALE GENOMIC DNA]</scope>
    <source>
        <strain>ATCC 700550 / JCM 31522 / CIP 106686 / LMG 19005 / NCIMB 14063 / MR-1</strain>
    </source>
</reference>
<keyword id="KW-0067">ATP-binding</keyword>
<keyword id="KW-0460">Magnesium</keyword>
<keyword id="KW-0547">Nucleotide-binding</keyword>
<keyword id="KW-1185">Reference proteome</keyword>
<keyword id="KW-0808">Transferase</keyword>
<keyword id="KW-0819">tRNA processing</keyword>
<evidence type="ECO:0000255" key="1">
    <source>
        <dbReference type="HAMAP-Rule" id="MF_00185"/>
    </source>
</evidence>
<comment type="function">
    <text evidence="1">Catalyzes the transfer of a dimethylallyl group onto the adenine at position 37 in tRNAs that read codons beginning with uridine, leading to the formation of N6-(dimethylallyl)adenosine (i(6)A).</text>
</comment>
<comment type="catalytic activity">
    <reaction evidence="1">
        <text>adenosine(37) in tRNA + dimethylallyl diphosphate = N(6)-dimethylallyladenosine(37) in tRNA + diphosphate</text>
        <dbReference type="Rhea" id="RHEA:26482"/>
        <dbReference type="Rhea" id="RHEA-COMP:10162"/>
        <dbReference type="Rhea" id="RHEA-COMP:10375"/>
        <dbReference type="ChEBI" id="CHEBI:33019"/>
        <dbReference type="ChEBI" id="CHEBI:57623"/>
        <dbReference type="ChEBI" id="CHEBI:74411"/>
        <dbReference type="ChEBI" id="CHEBI:74415"/>
        <dbReference type="EC" id="2.5.1.75"/>
    </reaction>
</comment>
<comment type="cofactor">
    <cofactor evidence="1">
        <name>Mg(2+)</name>
        <dbReference type="ChEBI" id="CHEBI:18420"/>
    </cofactor>
</comment>
<comment type="subunit">
    <text evidence="1">Monomer.</text>
</comment>
<comment type="similarity">
    <text evidence="1">Belongs to the IPP transferase family.</text>
</comment>
<name>MIAA_SHEON</name>
<dbReference type="EC" id="2.5.1.75" evidence="1"/>
<dbReference type="EMBL" id="AE014299">
    <property type="protein sequence ID" value="AAN53680.1"/>
    <property type="molecule type" value="Genomic_DNA"/>
</dbReference>
<dbReference type="RefSeq" id="NP_716235.1">
    <property type="nucleotide sequence ID" value="NC_004347.2"/>
</dbReference>
<dbReference type="RefSeq" id="WP_011070933.1">
    <property type="nucleotide sequence ID" value="NC_004347.2"/>
</dbReference>
<dbReference type="SMR" id="Q8CX50"/>
<dbReference type="STRING" id="211586.SO_0602"/>
<dbReference type="PaxDb" id="211586-SO_0602"/>
<dbReference type="KEGG" id="son:SO_0602"/>
<dbReference type="PATRIC" id="fig|211586.12.peg.581"/>
<dbReference type="eggNOG" id="COG0324">
    <property type="taxonomic scope" value="Bacteria"/>
</dbReference>
<dbReference type="HOGENOM" id="CLU_032616_0_0_6"/>
<dbReference type="OrthoDB" id="9776390at2"/>
<dbReference type="PhylomeDB" id="Q8CX50"/>
<dbReference type="BioCyc" id="SONE211586:G1GMP-572-MONOMER"/>
<dbReference type="Proteomes" id="UP000008186">
    <property type="component" value="Chromosome"/>
</dbReference>
<dbReference type="GO" id="GO:0005524">
    <property type="term" value="F:ATP binding"/>
    <property type="evidence" value="ECO:0007669"/>
    <property type="project" value="UniProtKB-UniRule"/>
</dbReference>
<dbReference type="GO" id="GO:0052381">
    <property type="term" value="F:tRNA dimethylallyltransferase activity"/>
    <property type="evidence" value="ECO:0000318"/>
    <property type="project" value="GO_Central"/>
</dbReference>
<dbReference type="GO" id="GO:0006400">
    <property type="term" value="P:tRNA modification"/>
    <property type="evidence" value="ECO:0000318"/>
    <property type="project" value="GO_Central"/>
</dbReference>
<dbReference type="FunFam" id="1.10.20.140:FF:000001">
    <property type="entry name" value="tRNA dimethylallyltransferase"/>
    <property type="match status" value="1"/>
</dbReference>
<dbReference type="Gene3D" id="1.10.20.140">
    <property type="match status" value="1"/>
</dbReference>
<dbReference type="Gene3D" id="3.40.50.300">
    <property type="entry name" value="P-loop containing nucleotide triphosphate hydrolases"/>
    <property type="match status" value="1"/>
</dbReference>
<dbReference type="HAMAP" id="MF_00185">
    <property type="entry name" value="IPP_trans"/>
    <property type="match status" value="1"/>
</dbReference>
<dbReference type="InterPro" id="IPR039657">
    <property type="entry name" value="Dimethylallyltransferase"/>
</dbReference>
<dbReference type="InterPro" id="IPR018022">
    <property type="entry name" value="IPT"/>
</dbReference>
<dbReference type="InterPro" id="IPR027417">
    <property type="entry name" value="P-loop_NTPase"/>
</dbReference>
<dbReference type="NCBIfam" id="TIGR00174">
    <property type="entry name" value="miaA"/>
    <property type="match status" value="1"/>
</dbReference>
<dbReference type="PANTHER" id="PTHR11088">
    <property type="entry name" value="TRNA DIMETHYLALLYLTRANSFERASE"/>
    <property type="match status" value="1"/>
</dbReference>
<dbReference type="PANTHER" id="PTHR11088:SF60">
    <property type="entry name" value="TRNA DIMETHYLALLYLTRANSFERASE"/>
    <property type="match status" value="1"/>
</dbReference>
<dbReference type="Pfam" id="PF01715">
    <property type="entry name" value="IPPT"/>
    <property type="match status" value="1"/>
</dbReference>
<dbReference type="SUPFAM" id="SSF52540">
    <property type="entry name" value="P-loop containing nucleoside triphosphate hydrolases"/>
    <property type="match status" value="1"/>
</dbReference>
<protein>
    <recommendedName>
        <fullName evidence="1">tRNA dimethylallyltransferase</fullName>
        <ecNumber evidence="1">2.5.1.75</ecNumber>
    </recommendedName>
    <alternativeName>
        <fullName evidence="1">Dimethylallyl diphosphate:tRNA dimethylallyltransferase</fullName>
        <shortName evidence="1">DMAPP:tRNA dimethylallyltransferase</shortName>
        <shortName evidence="1">DMATase</shortName>
    </alternativeName>
    <alternativeName>
        <fullName evidence="1">Isopentenyl-diphosphate:tRNA isopentenyltransferase</fullName>
        <shortName evidence="1">IPP transferase</shortName>
        <shortName evidence="1">IPPT</shortName>
        <shortName evidence="1">IPTase</shortName>
    </alternativeName>
</protein>
<feature type="chain" id="PRO_0000163970" description="tRNA dimethylallyltransferase">
    <location>
        <begin position="1"/>
        <end position="308"/>
    </location>
</feature>
<feature type="region of interest" description="Interaction with substrate tRNA" evidence="1">
    <location>
        <begin position="39"/>
        <end position="42"/>
    </location>
</feature>
<feature type="region of interest" description="Interaction with substrate tRNA" evidence="1">
    <location>
        <begin position="163"/>
        <end position="167"/>
    </location>
</feature>
<feature type="region of interest" description="Interaction with substrate tRNA" evidence="1">
    <location>
        <begin position="244"/>
        <end position="249"/>
    </location>
</feature>
<feature type="binding site" evidence="1">
    <location>
        <begin position="14"/>
        <end position="21"/>
    </location>
    <ligand>
        <name>ATP</name>
        <dbReference type="ChEBI" id="CHEBI:30616"/>
    </ligand>
</feature>
<feature type="binding site" evidence="1">
    <location>
        <begin position="16"/>
        <end position="21"/>
    </location>
    <ligand>
        <name>substrate</name>
    </ligand>
</feature>
<feature type="site" description="Interaction with substrate tRNA" evidence="1">
    <location>
        <position position="105"/>
    </location>
</feature>
<feature type="site" description="Interaction with substrate tRNA" evidence="1">
    <location>
        <position position="127"/>
    </location>
</feature>
<proteinExistence type="inferred from homology"/>
<accession>Q8CX50</accession>
<organism>
    <name type="scientific">Shewanella oneidensis (strain ATCC 700550 / JCM 31522 / CIP 106686 / LMG 19005 / NCIMB 14063 / MR-1)</name>
    <dbReference type="NCBI Taxonomy" id="211586"/>
    <lineage>
        <taxon>Bacteria</taxon>
        <taxon>Pseudomonadati</taxon>
        <taxon>Pseudomonadota</taxon>
        <taxon>Gammaproteobacteria</taxon>
        <taxon>Alteromonadales</taxon>
        <taxon>Shewanellaceae</taxon>
        <taxon>Shewanella</taxon>
    </lineage>
</organism>